<protein>
    <recommendedName>
        <fullName>Protein CAP22</fullName>
    </recommendedName>
</protein>
<name>CAP22_COLGL</name>
<reference key="1">
    <citation type="journal article" date="1995" name="Mol. Gen. Genet.">
        <title>Isolation and characterization of genes expressed uniquely during appressorium formation by Colletotrichum gloeosporioides conidia induced by the host surface wax.</title>
        <authorList>
            <person name="Hwang C.-S."/>
            <person name="Kolattukudy P.E."/>
        </authorList>
    </citation>
    <scope>NUCLEOTIDE SEQUENCE [GENOMIC DNA]</scope>
    <source>
        <tissue>Conidium</tissue>
    </source>
</reference>
<feature type="chain" id="PRO_0000089301" description="Protein CAP22">
    <location>
        <begin position="1"/>
        <end position="227"/>
    </location>
</feature>
<feature type="region of interest" description="Disordered" evidence="2">
    <location>
        <begin position="143"/>
        <end position="162"/>
    </location>
</feature>
<feature type="glycosylation site" description="N-linked (GlcNAc...) asparagine" evidence="1">
    <location>
        <position position="55"/>
    </location>
</feature>
<feature type="glycosylation site" description="N-linked (GlcNAc...) asparagine" evidence="1">
    <location>
        <position position="72"/>
    </location>
</feature>
<gene>
    <name type="primary">CAP22</name>
</gene>
<evidence type="ECO:0000255" key="1"/>
<evidence type="ECO:0000256" key="2">
    <source>
        <dbReference type="SAM" id="MobiDB-lite"/>
    </source>
</evidence>
<sequence>MQAKIVALSAIAAVVNADLRLNTNGIPSDCNAICRPIRDLGNICTVNFIPGQTNNNSDQLQDELDAQCVCTNSSFDVKNLAAQCSSCMSQKVPSDQQRSLEGINSIMSQCGFQATSYASSATSSANTIIVLATRLTASSQLTTTIGGGATPAPTSERSRTSDQARTTTFLTSNGGGFPSIATSTIGGGRETGSPNAAAGVVAPGSNSVLGAAGLAVAGAFALGAFML</sequence>
<proteinExistence type="evidence at transcript level"/>
<comment type="subcellular location">
    <subcellularLocation>
        <location>Secreted</location>
        <location>Cell wall</location>
    </subcellularLocation>
    <text>Located on the wall of the appressorium.</text>
</comment>
<comment type="developmental stage">
    <text>Expressed in the conidium only during the process of appressorium formation induced by avocado surface wax.</text>
</comment>
<accession>Q00371</accession>
<keyword id="KW-0134">Cell wall</keyword>
<keyword id="KW-0325">Glycoprotein</keyword>
<keyword id="KW-0964">Secreted</keyword>
<organism>
    <name type="scientific">Colletotrichum gloeosporioides</name>
    <name type="common">Anthracnose fungus</name>
    <name type="synonym">Glomerella cingulata</name>
    <dbReference type="NCBI Taxonomy" id="474922"/>
    <lineage>
        <taxon>Eukaryota</taxon>
        <taxon>Fungi</taxon>
        <taxon>Dikarya</taxon>
        <taxon>Ascomycota</taxon>
        <taxon>Pezizomycotina</taxon>
        <taxon>Sordariomycetes</taxon>
        <taxon>Hypocreomycetidae</taxon>
        <taxon>Glomerellales</taxon>
        <taxon>Glomerellaceae</taxon>
        <taxon>Colletotrichum</taxon>
        <taxon>Colletotrichum gloeosporioides species complex</taxon>
    </lineage>
</organism>
<dbReference type="EMBL" id="U18758">
    <property type="protein sequence ID" value="AAA77681.1"/>
    <property type="molecule type" value="Genomic_DNA"/>
</dbReference>
<dbReference type="PIR" id="S55031">
    <property type="entry name" value="S55031"/>
</dbReference>
<dbReference type="GlyCosmos" id="Q00371">
    <property type="glycosylation" value="2 sites, No reported glycans"/>
</dbReference>
<dbReference type="GO" id="GO:0005576">
    <property type="term" value="C:extracellular region"/>
    <property type="evidence" value="ECO:0007669"/>
    <property type="project" value="UniProtKB-KW"/>
</dbReference>